<proteinExistence type="inferred from homology"/>
<feature type="chain" id="PRO_0000108851" description="Phospho-N-acetylmuramoyl-pentapeptide-transferase">
    <location>
        <begin position="1"/>
        <end position="360"/>
    </location>
</feature>
<feature type="transmembrane region" description="Helical" evidence="1">
    <location>
        <begin position="21"/>
        <end position="41"/>
    </location>
</feature>
<feature type="transmembrane region" description="Helical" evidence="1">
    <location>
        <begin position="73"/>
        <end position="93"/>
    </location>
</feature>
<feature type="transmembrane region" description="Helical" evidence="1">
    <location>
        <begin position="94"/>
        <end position="114"/>
    </location>
</feature>
<feature type="transmembrane region" description="Helical" evidence="1">
    <location>
        <begin position="132"/>
        <end position="152"/>
    </location>
</feature>
<feature type="transmembrane region" description="Helical" evidence="1">
    <location>
        <begin position="168"/>
        <end position="188"/>
    </location>
</feature>
<feature type="transmembrane region" description="Helical" evidence="1">
    <location>
        <begin position="199"/>
        <end position="219"/>
    </location>
</feature>
<feature type="transmembrane region" description="Helical" evidence="1">
    <location>
        <begin position="239"/>
        <end position="259"/>
    </location>
</feature>
<feature type="transmembrane region" description="Helical" evidence="1">
    <location>
        <begin position="263"/>
        <end position="283"/>
    </location>
</feature>
<feature type="transmembrane region" description="Helical" evidence="1">
    <location>
        <begin position="288"/>
        <end position="308"/>
    </location>
</feature>
<feature type="transmembrane region" description="Helical" evidence="1">
    <location>
        <begin position="338"/>
        <end position="358"/>
    </location>
</feature>
<gene>
    <name evidence="1" type="primary">mraY</name>
    <name type="ordered locus">MS1670</name>
</gene>
<evidence type="ECO:0000255" key="1">
    <source>
        <dbReference type="HAMAP-Rule" id="MF_00038"/>
    </source>
</evidence>
<reference key="1">
    <citation type="journal article" date="2004" name="Nat. Biotechnol.">
        <title>The genome sequence of the capnophilic rumen bacterium Mannheimia succiniciproducens.</title>
        <authorList>
            <person name="Hong S.H."/>
            <person name="Kim J.S."/>
            <person name="Lee S.Y."/>
            <person name="In Y.H."/>
            <person name="Choi S.S."/>
            <person name="Rih J.-K."/>
            <person name="Kim C.H."/>
            <person name="Jeong H."/>
            <person name="Hur C.G."/>
            <person name="Kim J.J."/>
        </authorList>
    </citation>
    <scope>NUCLEOTIDE SEQUENCE [LARGE SCALE GENOMIC DNA]</scope>
    <source>
        <strain>KCTC 0769BP / MBEL55E</strain>
    </source>
</reference>
<name>MRAY_MANSM</name>
<protein>
    <recommendedName>
        <fullName evidence="1">Phospho-N-acetylmuramoyl-pentapeptide-transferase</fullName>
        <ecNumber evidence="1">2.7.8.13</ecNumber>
    </recommendedName>
    <alternativeName>
        <fullName evidence="1">UDP-MurNAc-pentapeptide phosphotransferase</fullName>
    </alternativeName>
</protein>
<keyword id="KW-0131">Cell cycle</keyword>
<keyword id="KW-0132">Cell division</keyword>
<keyword id="KW-0997">Cell inner membrane</keyword>
<keyword id="KW-1003">Cell membrane</keyword>
<keyword id="KW-0133">Cell shape</keyword>
<keyword id="KW-0961">Cell wall biogenesis/degradation</keyword>
<keyword id="KW-0460">Magnesium</keyword>
<keyword id="KW-0472">Membrane</keyword>
<keyword id="KW-0479">Metal-binding</keyword>
<keyword id="KW-0573">Peptidoglycan synthesis</keyword>
<keyword id="KW-0808">Transferase</keyword>
<keyword id="KW-0812">Transmembrane</keyword>
<keyword id="KW-1133">Transmembrane helix</keyword>
<organism>
    <name type="scientific">Mannheimia succiniciproducens (strain KCTC 0769BP / MBEL55E)</name>
    <dbReference type="NCBI Taxonomy" id="221988"/>
    <lineage>
        <taxon>Bacteria</taxon>
        <taxon>Pseudomonadati</taxon>
        <taxon>Pseudomonadota</taxon>
        <taxon>Gammaproteobacteria</taxon>
        <taxon>Pasteurellales</taxon>
        <taxon>Pasteurellaceae</taxon>
        <taxon>Basfia</taxon>
    </lineage>
</organism>
<dbReference type="EC" id="2.7.8.13" evidence="1"/>
<dbReference type="EMBL" id="AE016827">
    <property type="protein sequence ID" value="AAU38277.1"/>
    <property type="molecule type" value="Genomic_DNA"/>
</dbReference>
<dbReference type="RefSeq" id="WP_011200838.1">
    <property type="nucleotide sequence ID" value="NC_006300.1"/>
</dbReference>
<dbReference type="SMR" id="Q65RY3"/>
<dbReference type="STRING" id="221988.MS1670"/>
<dbReference type="KEGG" id="msu:MS1670"/>
<dbReference type="eggNOG" id="COG0472">
    <property type="taxonomic scope" value="Bacteria"/>
</dbReference>
<dbReference type="HOGENOM" id="CLU_023982_0_0_6"/>
<dbReference type="OrthoDB" id="9805475at2"/>
<dbReference type="UniPathway" id="UPA00219"/>
<dbReference type="Proteomes" id="UP000000607">
    <property type="component" value="Chromosome"/>
</dbReference>
<dbReference type="GO" id="GO:0005886">
    <property type="term" value="C:plasma membrane"/>
    <property type="evidence" value="ECO:0007669"/>
    <property type="project" value="UniProtKB-SubCell"/>
</dbReference>
<dbReference type="GO" id="GO:0046872">
    <property type="term" value="F:metal ion binding"/>
    <property type="evidence" value="ECO:0007669"/>
    <property type="project" value="UniProtKB-KW"/>
</dbReference>
<dbReference type="GO" id="GO:0008963">
    <property type="term" value="F:phospho-N-acetylmuramoyl-pentapeptide-transferase activity"/>
    <property type="evidence" value="ECO:0007669"/>
    <property type="project" value="UniProtKB-UniRule"/>
</dbReference>
<dbReference type="GO" id="GO:0051992">
    <property type="term" value="F:UDP-N-acetylmuramoyl-L-alanyl-D-glutamyl-meso-2,6-diaminopimelyl-D-alanyl-D-alanine:undecaprenyl-phosphate transferase activity"/>
    <property type="evidence" value="ECO:0007669"/>
    <property type="project" value="RHEA"/>
</dbReference>
<dbReference type="GO" id="GO:0051301">
    <property type="term" value="P:cell division"/>
    <property type="evidence" value="ECO:0007669"/>
    <property type="project" value="UniProtKB-KW"/>
</dbReference>
<dbReference type="GO" id="GO:0071555">
    <property type="term" value="P:cell wall organization"/>
    <property type="evidence" value="ECO:0007669"/>
    <property type="project" value="UniProtKB-KW"/>
</dbReference>
<dbReference type="GO" id="GO:0009252">
    <property type="term" value="P:peptidoglycan biosynthetic process"/>
    <property type="evidence" value="ECO:0007669"/>
    <property type="project" value="UniProtKB-UniRule"/>
</dbReference>
<dbReference type="GO" id="GO:0008360">
    <property type="term" value="P:regulation of cell shape"/>
    <property type="evidence" value="ECO:0007669"/>
    <property type="project" value="UniProtKB-KW"/>
</dbReference>
<dbReference type="CDD" id="cd06852">
    <property type="entry name" value="GT_MraY"/>
    <property type="match status" value="1"/>
</dbReference>
<dbReference type="HAMAP" id="MF_00038">
    <property type="entry name" value="MraY"/>
    <property type="match status" value="1"/>
</dbReference>
<dbReference type="InterPro" id="IPR000715">
    <property type="entry name" value="Glycosyl_transferase_4"/>
</dbReference>
<dbReference type="InterPro" id="IPR003524">
    <property type="entry name" value="PNAcMuramoyl-5peptid_Trfase"/>
</dbReference>
<dbReference type="InterPro" id="IPR018480">
    <property type="entry name" value="PNAcMuramoyl-5peptid_Trfase_CS"/>
</dbReference>
<dbReference type="NCBIfam" id="TIGR00445">
    <property type="entry name" value="mraY"/>
    <property type="match status" value="1"/>
</dbReference>
<dbReference type="PANTHER" id="PTHR22926">
    <property type="entry name" value="PHOSPHO-N-ACETYLMURAMOYL-PENTAPEPTIDE-TRANSFERASE"/>
    <property type="match status" value="1"/>
</dbReference>
<dbReference type="PANTHER" id="PTHR22926:SF5">
    <property type="entry name" value="PHOSPHO-N-ACETYLMURAMOYL-PENTAPEPTIDE-TRANSFERASE HOMOLOG"/>
    <property type="match status" value="1"/>
</dbReference>
<dbReference type="Pfam" id="PF00953">
    <property type="entry name" value="Glycos_transf_4"/>
    <property type="match status" value="1"/>
</dbReference>
<dbReference type="Pfam" id="PF10555">
    <property type="entry name" value="MraY_sig1"/>
    <property type="match status" value="1"/>
</dbReference>
<dbReference type="PROSITE" id="PS01347">
    <property type="entry name" value="MRAY_1"/>
    <property type="match status" value="1"/>
</dbReference>
<dbReference type="PROSITE" id="PS01348">
    <property type="entry name" value="MRAY_2"/>
    <property type="match status" value="1"/>
</dbReference>
<comment type="function">
    <text evidence="1">Catalyzes the initial step of the lipid cycle reactions in the biosynthesis of the cell wall peptidoglycan: transfers peptidoglycan precursor phospho-MurNAc-pentapeptide from UDP-MurNAc-pentapeptide onto the lipid carrier undecaprenyl phosphate, yielding undecaprenyl-pyrophosphoryl-MurNAc-pentapeptide, known as lipid I.</text>
</comment>
<comment type="catalytic activity">
    <reaction evidence="1">
        <text>UDP-N-acetyl-alpha-D-muramoyl-L-alanyl-gamma-D-glutamyl-meso-2,6-diaminopimeloyl-D-alanyl-D-alanine + di-trans,octa-cis-undecaprenyl phosphate = di-trans,octa-cis-undecaprenyl diphospho-N-acetyl-alpha-D-muramoyl-L-alanyl-D-glutamyl-meso-2,6-diaminopimeloyl-D-alanyl-D-alanine + UMP</text>
        <dbReference type="Rhea" id="RHEA:28386"/>
        <dbReference type="ChEBI" id="CHEBI:57865"/>
        <dbReference type="ChEBI" id="CHEBI:60392"/>
        <dbReference type="ChEBI" id="CHEBI:61386"/>
        <dbReference type="ChEBI" id="CHEBI:61387"/>
        <dbReference type="EC" id="2.7.8.13"/>
    </reaction>
</comment>
<comment type="cofactor">
    <cofactor evidence="1">
        <name>Mg(2+)</name>
        <dbReference type="ChEBI" id="CHEBI:18420"/>
    </cofactor>
</comment>
<comment type="pathway">
    <text evidence="1">Cell wall biogenesis; peptidoglycan biosynthesis.</text>
</comment>
<comment type="subcellular location">
    <subcellularLocation>
        <location evidence="1">Cell inner membrane</location>
        <topology evidence="1">Multi-pass membrane protein</topology>
    </subcellularLocation>
</comment>
<comment type="similarity">
    <text evidence="1">Belongs to the glycosyltransferase 4 family. MraY subfamily.</text>
</comment>
<sequence>MLVWFAKFLEQYYSGFNVVSYLTFRSVLALLTALLLSLWIGPKMIRRLQIFKFGQEVRNDGPESHFQKRGTPTMGGLMILATITVSTLLWGDLSNPYIWFSLFVLLGYGAIGFVDDYRKIKYKNTDGLIARWKYFWLSLVSLIAIFGMYALGKDTDATRLVVPFFKEIMPQLGLFYVVLAYFVIVGTSNAVNLTDGLDGLAIMPTVFVAGAFAIIAWATGNVEISKYLYIPYIKYTSELVIFCTAIVGAGLGFLWFNTYPAQVFMGDVGSLALGGALGTIAVLVRQEFLLVIMGGVFVMETVSVILQVGSYKLRKKRIFRMAPIHHHYELKGWPEPRVIIRFWIISLMLVLFGLVTLKLR</sequence>
<accession>Q65RY3</accession>